<feature type="chain" id="PRO_0000256260" description="Protein BTN1">
    <location>
        <begin position="1"/>
        <end position="516"/>
    </location>
</feature>
<feature type="transmembrane region" description="Helical" evidence="2">
    <location>
        <begin position="24"/>
        <end position="44"/>
    </location>
</feature>
<feature type="transmembrane region" description="Helical" evidence="2">
    <location>
        <begin position="57"/>
        <end position="77"/>
    </location>
</feature>
<feature type="transmembrane region" description="Helical" evidence="2">
    <location>
        <begin position="88"/>
        <end position="108"/>
    </location>
</feature>
<feature type="transmembrane region" description="Helical" evidence="2">
    <location>
        <begin position="112"/>
        <end position="132"/>
    </location>
</feature>
<feature type="transmembrane region" description="Helical" evidence="2">
    <location>
        <begin position="146"/>
        <end position="166"/>
    </location>
</feature>
<feature type="transmembrane region" description="Helical" evidence="2">
    <location>
        <begin position="169"/>
        <end position="189"/>
    </location>
</feature>
<feature type="transmembrane region" description="Helical" evidence="2">
    <location>
        <begin position="371"/>
        <end position="391"/>
    </location>
</feature>
<feature type="transmembrane region" description="Helical" evidence="2">
    <location>
        <begin position="409"/>
        <end position="429"/>
    </location>
</feature>
<sequence length="516" mass="56656">MDKDNQALDELPMLTGSKHANKRLFAAFMIFGLLNNVLYVIILSAALDLVSADTPKGVVALFNIFPALITKVVWPLLSNGKIRYTRRVGFCTICSWFGIITIALSSSLSPRLLGISLASLSSGMGELTFLQLTTTLPTEATSKTALGAWSSGTGFAGVAGAGIWWLLRGLGVKGGLGLSSFLPLFFPITYKYILPPFSHLEASSDSSPYQRLPMSSSLSNNNNFRPPAILISVPSSEYVPQHTPLLSSGFIDRDRDRNRDGEELTDGDKRLMGMRASRLTTQEKMKLLRPLVVRYMLPLCAVYVEEYVINSGVAPTLVFPLPTYGLWSWLFKSPRDYYPFWSLTYQTFVFLSRSSLSLGLPPIPKRLLPLPAIIQFLVLSLLFLQAKTFFFSSPAYTPPADGDGGVDRSITIVFLLICLEGLCGGSGYVNTFYHVGREGSVSENYDADGDNEMGGDRRTVNVTEMEKKAMEREFRIGAVGAADSTGILFASLISMPLEIALCRSQVDQGRTMCREL</sequence>
<keyword id="KW-0029">Amino-acid transport</keyword>
<keyword id="KW-0472">Membrane</keyword>
<keyword id="KW-1185">Reference proteome</keyword>
<keyword id="KW-0812">Transmembrane</keyword>
<keyword id="KW-1133">Transmembrane helix</keyword>
<keyword id="KW-0813">Transport</keyword>
<keyword id="KW-0926">Vacuole</keyword>
<comment type="function">
    <text evidence="1">Involved in vacuolar transport and vacuole pH homeostasis. Also required for cytokinesis (By similarity).</text>
</comment>
<comment type="subcellular location">
    <subcellularLocation>
        <location evidence="1">Vacuole membrane</location>
        <topology evidence="1">Multi-pass membrane protein</topology>
    </subcellularLocation>
</comment>
<comment type="similarity">
    <text evidence="3">Belongs to the battenin family.</text>
</comment>
<reference key="1">
    <citation type="journal article" date="2005" name="Science">
        <title>The genome of the basidiomycetous yeast and human pathogen Cryptococcus neoformans.</title>
        <authorList>
            <person name="Loftus B.J."/>
            <person name="Fung E."/>
            <person name="Roncaglia P."/>
            <person name="Rowley D."/>
            <person name="Amedeo P."/>
            <person name="Bruno D."/>
            <person name="Vamathevan J."/>
            <person name="Miranda M."/>
            <person name="Anderson I.J."/>
            <person name="Fraser J.A."/>
            <person name="Allen J.E."/>
            <person name="Bosdet I.E."/>
            <person name="Brent M.R."/>
            <person name="Chiu R."/>
            <person name="Doering T.L."/>
            <person name="Donlin M.J."/>
            <person name="D'Souza C.A."/>
            <person name="Fox D.S."/>
            <person name="Grinberg V."/>
            <person name="Fu J."/>
            <person name="Fukushima M."/>
            <person name="Haas B.J."/>
            <person name="Huang J.C."/>
            <person name="Janbon G."/>
            <person name="Jones S.J.M."/>
            <person name="Koo H.L."/>
            <person name="Krzywinski M.I."/>
            <person name="Kwon-Chung K.J."/>
            <person name="Lengeler K.B."/>
            <person name="Maiti R."/>
            <person name="Marra M.A."/>
            <person name="Marra R.E."/>
            <person name="Mathewson C.A."/>
            <person name="Mitchell T.G."/>
            <person name="Pertea M."/>
            <person name="Riggs F.R."/>
            <person name="Salzberg S.L."/>
            <person name="Schein J.E."/>
            <person name="Shvartsbeyn A."/>
            <person name="Shin H."/>
            <person name="Shumway M."/>
            <person name="Specht C.A."/>
            <person name="Suh B.B."/>
            <person name="Tenney A."/>
            <person name="Utterback T.R."/>
            <person name="Wickes B.L."/>
            <person name="Wortman J.R."/>
            <person name="Wye N.H."/>
            <person name="Kronstad J.W."/>
            <person name="Lodge J.K."/>
            <person name="Heitman J."/>
            <person name="Davis R.W."/>
            <person name="Fraser C.M."/>
            <person name="Hyman R.W."/>
        </authorList>
    </citation>
    <scope>NUCLEOTIDE SEQUENCE [LARGE SCALE GENOMIC DNA]</scope>
    <source>
        <strain>JEC21 / ATCC MYA-565</strain>
    </source>
</reference>
<protein>
    <recommendedName>
        <fullName>Protein BTN1</fullName>
    </recommendedName>
</protein>
<name>BTN1_CRYNJ</name>
<evidence type="ECO:0000250" key="1"/>
<evidence type="ECO:0000255" key="2"/>
<evidence type="ECO:0000305" key="3"/>
<gene>
    <name type="primary">BTN1</name>
    <name type="ordered locus">CNF00440</name>
</gene>
<proteinExistence type="inferred from homology"/>
<dbReference type="EMBL" id="AE017346">
    <property type="protein sequence ID" value="AAW44170.1"/>
    <property type="molecule type" value="Genomic_DNA"/>
</dbReference>
<dbReference type="RefSeq" id="XP_571477.1">
    <property type="nucleotide sequence ID" value="XM_571477.1"/>
</dbReference>
<dbReference type="FunCoup" id="P0CM42">
    <property type="interactions" value="90"/>
</dbReference>
<dbReference type="STRING" id="214684.P0CM42"/>
<dbReference type="PaxDb" id="214684-P0CM42"/>
<dbReference type="EnsemblFungi" id="AAW44170">
    <property type="protein sequence ID" value="AAW44170"/>
    <property type="gene ID" value="CNF00440"/>
</dbReference>
<dbReference type="GeneID" id="3258156"/>
<dbReference type="KEGG" id="cne:CNF00440"/>
<dbReference type="VEuPathDB" id="FungiDB:CNF00440"/>
<dbReference type="eggNOG" id="KOG3880">
    <property type="taxonomic scope" value="Eukaryota"/>
</dbReference>
<dbReference type="HOGENOM" id="CLU_029663_3_1_1"/>
<dbReference type="InParanoid" id="P0CM42"/>
<dbReference type="OMA" id="WLCNWQV"/>
<dbReference type="OrthoDB" id="5965864at2759"/>
<dbReference type="Proteomes" id="UP000002149">
    <property type="component" value="Chromosome 6"/>
</dbReference>
<dbReference type="GO" id="GO:0032153">
    <property type="term" value="C:cell division site"/>
    <property type="evidence" value="ECO:0007669"/>
    <property type="project" value="EnsemblFungi"/>
</dbReference>
<dbReference type="GO" id="GO:0051286">
    <property type="term" value="C:cell tip"/>
    <property type="evidence" value="ECO:0007669"/>
    <property type="project" value="EnsemblFungi"/>
</dbReference>
<dbReference type="GO" id="GO:0000329">
    <property type="term" value="C:fungal-type vacuole membrane"/>
    <property type="evidence" value="ECO:0007669"/>
    <property type="project" value="EnsemblFungi"/>
</dbReference>
<dbReference type="GO" id="GO:0005773">
    <property type="term" value="C:vacuole"/>
    <property type="evidence" value="ECO:0000318"/>
    <property type="project" value="GO_Central"/>
</dbReference>
<dbReference type="GO" id="GO:0006865">
    <property type="term" value="P:amino acid transport"/>
    <property type="evidence" value="ECO:0007669"/>
    <property type="project" value="UniProtKB-KW"/>
</dbReference>
<dbReference type="GO" id="GO:0051453">
    <property type="term" value="P:regulation of intracellular pH"/>
    <property type="evidence" value="ECO:0000318"/>
    <property type="project" value="GO_Central"/>
</dbReference>
<dbReference type="InterPro" id="IPR003492">
    <property type="entry name" value="Battenin_disease_Cln3"/>
</dbReference>
<dbReference type="InterPro" id="IPR036259">
    <property type="entry name" value="MFS_trans_sf"/>
</dbReference>
<dbReference type="PANTHER" id="PTHR10981">
    <property type="entry name" value="BATTENIN"/>
    <property type="match status" value="1"/>
</dbReference>
<dbReference type="PANTHER" id="PTHR10981:SF0">
    <property type="entry name" value="BATTENIN"/>
    <property type="match status" value="1"/>
</dbReference>
<dbReference type="Pfam" id="PF02487">
    <property type="entry name" value="CLN3"/>
    <property type="match status" value="1"/>
</dbReference>
<dbReference type="PRINTS" id="PR01315">
    <property type="entry name" value="BATTENIN"/>
</dbReference>
<dbReference type="SUPFAM" id="SSF103473">
    <property type="entry name" value="MFS general substrate transporter"/>
    <property type="match status" value="1"/>
</dbReference>
<organism>
    <name type="scientific">Cryptococcus neoformans var. neoformans serotype D (strain JEC21 / ATCC MYA-565)</name>
    <name type="common">Filobasidiella neoformans</name>
    <dbReference type="NCBI Taxonomy" id="214684"/>
    <lineage>
        <taxon>Eukaryota</taxon>
        <taxon>Fungi</taxon>
        <taxon>Dikarya</taxon>
        <taxon>Basidiomycota</taxon>
        <taxon>Agaricomycotina</taxon>
        <taxon>Tremellomycetes</taxon>
        <taxon>Tremellales</taxon>
        <taxon>Cryptococcaceae</taxon>
        <taxon>Cryptococcus</taxon>
        <taxon>Cryptococcus neoformans species complex</taxon>
    </lineage>
</organism>
<accession>P0CM42</accession>
<accession>Q55QB2</accession>
<accession>Q5KFV4</accession>